<name>DAPAT_GLOVI</name>
<comment type="function">
    <text evidence="2">Involved in the synthesis of meso-diaminopimelate (m-DAP or DL-DAP), required for both lysine and peptidoglycan biosynthesis. Catalyzes the direct conversion of tetrahydrodipicolinate to LL-diaminopimelate. Can also use m-DAP instead of LL-DAP as the amino-group donor.</text>
</comment>
<comment type="catalytic activity">
    <reaction evidence="1">
        <text>(2S,6S)-2,6-diaminopimelate + 2-oxoglutarate = (S)-2,3,4,5-tetrahydrodipicolinate + L-glutamate + H2O + H(+)</text>
        <dbReference type="Rhea" id="RHEA:23988"/>
        <dbReference type="ChEBI" id="CHEBI:15377"/>
        <dbReference type="ChEBI" id="CHEBI:15378"/>
        <dbReference type="ChEBI" id="CHEBI:16810"/>
        <dbReference type="ChEBI" id="CHEBI:16845"/>
        <dbReference type="ChEBI" id="CHEBI:29985"/>
        <dbReference type="ChEBI" id="CHEBI:57609"/>
        <dbReference type="EC" id="2.6.1.83"/>
    </reaction>
</comment>
<comment type="cofactor">
    <cofactor evidence="1">
        <name>pyridoxal 5'-phosphate</name>
        <dbReference type="ChEBI" id="CHEBI:597326"/>
    </cofactor>
</comment>
<comment type="pathway">
    <text evidence="1 2">Amino-acid biosynthesis; L-lysine biosynthesis via DAP pathway; LL-2,6-diaminopimelate from (S)-tetrahydrodipicolinate (aminotransferase route): step 1/1.</text>
</comment>
<comment type="subunit">
    <text evidence="1">Homodimer.</text>
</comment>
<comment type="similarity">
    <text evidence="1">Belongs to the class-I pyridoxal-phosphate-dependent aminotransferase family. LL-diaminopimelate aminotransferase subfamily.</text>
</comment>
<gene>
    <name evidence="1" type="primary">dapL</name>
    <name type="ordered locus">glr4108</name>
</gene>
<keyword id="KW-0032">Aminotransferase</keyword>
<keyword id="KW-0663">Pyridoxal phosphate</keyword>
<keyword id="KW-1185">Reference proteome</keyword>
<keyword id="KW-0808">Transferase</keyword>
<organism>
    <name type="scientific">Gloeobacter violaceus (strain ATCC 29082 / PCC 7421)</name>
    <dbReference type="NCBI Taxonomy" id="251221"/>
    <lineage>
        <taxon>Bacteria</taxon>
        <taxon>Bacillati</taxon>
        <taxon>Cyanobacteriota</taxon>
        <taxon>Cyanophyceae</taxon>
        <taxon>Gloeobacterales</taxon>
        <taxon>Gloeobacteraceae</taxon>
        <taxon>Gloeobacter</taxon>
    </lineage>
</organism>
<dbReference type="EC" id="2.6.1.83" evidence="1"/>
<dbReference type="EMBL" id="BA000045">
    <property type="protein sequence ID" value="BAC92049.1"/>
    <property type="molecule type" value="Genomic_DNA"/>
</dbReference>
<dbReference type="RefSeq" id="NP_927054.1">
    <property type="nucleotide sequence ID" value="NC_005125.1"/>
</dbReference>
<dbReference type="RefSeq" id="WP_011144094.1">
    <property type="nucleotide sequence ID" value="NC_005125.1"/>
</dbReference>
<dbReference type="SMR" id="Q7NDX4"/>
<dbReference type="STRING" id="251221.gene:10761626"/>
<dbReference type="EnsemblBacteria" id="BAC92049">
    <property type="protein sequence ID" value="BAC92049"/>
    <property type="gene ID" value="BAC92049"/>
</dbReference>
<dbReference type="KEGG" id="gvi:glr4108"/>
<dbReference type="PATRIC" id="fig|251221.4.peg.4140"/>
<dbReference type="eggNOG" id="COG0436">
    <property type="taxonomic scope" value="Bacteria"/>
</dbReference>
<dbReference type="HOGENOM" id="CLU_017584_4_5_3"/>
<dbReference type="InParanoid" id="Q7NDX4"/>
<dbReference type="OrthoDB" id="9802328at2"/>
<dbReference type="PhylomeDB" id="Q7NDX4"/>
<dbReference type="BRENDA" id="2.6.1.83">
    <property type="organism ID" value="7368"/>
</dbReference>
<dbReference type="UniPathway" id="UPA00034">
    <property type="reaction ID" value="UER00466"/>
</dbReference>
<dbReference type="Proteomes" id="UP000000557">
    <property type="component" value="Chromosome"/>
</dbReference>
<dbReference type="GO" id="GO:0010285">
    <property type="term" value="F:L,L-diaminopimelate aminotransferase activity"/>
    <property type="evidence" value="ECO:0007669"/>
    <property type="project" value="UniProtKB-UniRule"/>
</dbReference>
<dbReference type="GO" id="GO:0030170">
    <property type="term" value="F:pyridoxal phosphate binding"/>
    <property type="evidence" value="ECO:0007669"/>
    <property type="project" value="UniProtKB-UniRule"/>
</dbReference>
<dbReference type="GO" id="GO:0033362">
    <property type="term" value="P:lysine biosynthetic process via diaminopimelate, diaminopimelate-aminotransferase pathway"/>
    <property type="evidence" value="ECO:0007669"/>
    <property type="project" value="UniProtKB-UniRule"/>
</dbReference>
<dbReference type="CDD" id="cd00609">
    <property type="entry name" value="AAT_like"/>
    <property type="match status" value="1"/>
</dbReference>
<dbReference type="Gene3D" id="3.90.1150.10">
    <property type="entry name" value="Aspartate Aminotransferase, domain 1"/>
    <property type="match status" value="1"/>
</dbReference>
<dbReference type="Gene3D" id="3.40.640.10">
    <property type="entry name" value="Type I PLP-dependent aspartate aminotransferase-like (Major domain)"/>
    <property type="match status" value="1"/>
</dbReference>
<dbReference type="HAMAP" id="MF_01642">
    <property type="entry name" value="DapL_aminotrans_1"/>
    <property type="match status" value="1"/>
</dbReference>
<dbReference type="InterPro" id="IPR004839">
    <property type="entry name" value="Aminotransferase_I/II_large"/>
</dbReference>
<dbReference type="InterPro" id="IPR019942">
    <property type="entry name" value="DapL/ALD1"/>
</dbReference>
<dbReference type="InterPro" id="IPR050881">
    <property type="entry name" value="LL-DAP_aminotransferase"/>
</dbReference>
<dbReference type="InterPro" id="IPR004838">
    <property type="entry name" value="NHTrfase_class1_PyrdxlP-BS"/>
</dbReference>
<dbReference type="InterPro" id="IPR015424">
    <property type="entry name" value="PyrdxlP-dep_Trfase"/>
</dbReference>
<dbReference type="InterPro" id="IPR015421">
    <property type="entry name" value="PyrdxlP-dep_Trfase_major"/>
</dbReference>
<dbReference type="InterPro" id="IPR015422">
    <property type="entry name" value="PyrdxlP-dep_Trfase_small"/>
</dbReference>
<dbReference type="NCBIfam" id="NF006756">
    <property type="entry name" value="PRK09276.1"/>
    <property type="match status" value="1"/>
</dbReference>
<dbReference type="PANTHER" id="PTHR42832">
    <property type="entry name" value="AMINO ACID AMINOTRANSFERASE"/>
    <property type="match status" value="1"/>
</dbReference>
<dbReference type="PANTHER" id="PTHR42832:SF3">
    <property type="entry name" value="L-GLUTAMINE--4-(METHYLSULFANYL)-2-OXOBUTANOATE AMINOTRANSFERASE"/>
    <property type="match status" value="1"/>
</dbReference>
<dbReference type="Pfam" id="PF00155">
    <property type="entry name" value="Aminotran_1_2"/>
    <property type="match status" value="1"/>
</dbReference>
<dbReference type="SUPFAM" id="SSF53383">
    <property type="entry name" value="PLP-dependent transferases"/>
    <property type="match status" value="1"/>
</dbReference>
<dbReference type="PROSITE" id="PS00105">
    <property type="entry name" value="AA_TRANSFER_CLASS_1"/>
    <property type="match status" value="1"/>
</dbReference>
<evidence type="ECO:0000255" key="1">
    <source>
        <dbReference type="HAMAP-Rule" id="MF_01642"/>
    </source>
</evidence>
<evidence type="ECO:0000269" key="2">
    <source>
    </source>
</evidence>
<evidence type="ECO:0000303" key="3">
    <source>
    </source>
</evidence>
<protein>
    <recommendedName>
        <fullName evidence="1 3">LL-diaminopimelate aminotransferase</fullName>
        <shortName evidence="1 3">DAP-AT</shortName>
        <shortName evidence="1 3">DAP-aminotransferase</shortName>
        <shortName evidence="1 3">LL-DAP-aminotransferase</shortName>
        <ecNumber evidence="1">2.6.1.83</ecNumber>
    </recommendedName>
</protein>
<reference key="1">
    <citation type="journal article" date="2003" name="DNA Res.">
        <title>Complete genome structure of Gloeobacter violaceus PCC 7421, a cyanobacterium that lacks thylakoids.</title>
        <authorList>
            <person name="Nakamura Y."/>
            <person name="Kaneko T."/>
            <person name="Sato S."/>
            <person name="Mimuro M."/>
            <person name="Miyashita H."/>
            <person name="Tsuchiya T."/>
            <person name="Sasamoto S."/>
            <person name="Watanabe A."/>
            <person name="Kawashima K."/>
            <person name="Kishida Y."/>
            <person name="Kiyokawa C."/>
            <person name="Kohara M."/>
            <person name="Matsumoto M."/>
            <person name="Matsuno A."/>
            <person name="Nakazaki N."/>
            <person name="Shimpo S."/>
            <person name="Takeuchi C."/>
            <person name="Yamada M."/>
            <person name="Tabata S."/>
        </authorList>
    </citation>
    <scope>NUCLEOTIDE SEQUENCE [LARGE SCALE GENOMIC DNA]</scope>
    <source>
        <strain>ATCC 29082 / PCC 7421</strain>
    </source>
</reference>
<reference key="2">
    <citation type="journal article" date="2008" name="J. Bacteriol.">
        <title>Biochemical and phylogenetic characterization of a novel diaminopimelate biosynthesis pathway in prokaryotes identifies a diverged form of LL-diaminopimelate aminotransferase.</title>
        <authorList>
            <person name="Hudson A.O."/>
            <person name="Gilvarg C."/>
            <person name="Leustek T."/>
        </authorList>
    </citation>
    <scope>FUNCTION AS A LL-DAP AMINOTRANSFERASE</scope>
    <scope>SUBSTRATE SPECIFICITY</scope>
    <scope>PATHWAY</scope>
    <source>
        <strain>ATCC 29082 / PCC 7421</strain>
    </source>
</reference>
<proteinExistence type="evidence at protein level"/>
<feature type="chain" id="PRO_0000342241" description="LL-diaminopimelate aminotransferase">
    <location>
        <begin position="1"/>
        <end position="392"/>
    </location>
</feature>
<feature type="binding site" evidence="1">
    <location>
        <position position="13"/>
    </location>
    <ligand>
        <name>substrate</name>
    </ligand>
</feature>
<feature type="binding site" evidence="1">
    <location>
        <position position="38"/>
    </location>
    <ligand>
        <name>substrate</name>
    </ligand>
</feature>
<feature type="binding site" evidence="1">
    <location>
        <position position="67"/>
    </location>
    <ligand>
        <name>pyridoxal 5'-phosphate</name>
        <dbReference type="ChEBI" id="CHEBI:597326"/>
    </ligand>
</feature>
<feature type="binding site" evidence="1">
    <location>
        <begin position="102"/>
        <end position="103"/>
    </location>
    <ligand>
        <name>pyridoxal 5'-phosphate</name>
        <dbReference type="ChEBI" id="CHEBI:597326"/>
    </ligand>
</feature>
<feature type="binding site" evidence="1">
    <location>
        <position position="103"/>
    </location>
    <ligand>
        <name>substrate</name>
    </ligand>
</feature>
<feature type="binding site" evidence="1">
    <location>
        <position position="127"/>
    </location>
    <ligand>
        <name>pyridoxal 5'-phosphate</name>
        <dbReference type="ChEBI" id="CHEBI:597326"/>
    </ligand>
</feature>
<feature type="binding site" evidence="1">
    <location>
        <position position="127"/>
    </location>
    <ligand>
        <name>substrate</name>
    </ligand>
</feature>
<feature type="binding site" evidence="1">
    <location>
        <position position="177"/>
    </location>
    <ligand>
        <name>pyridoxal 5'-phosphate</name>
        <dbReference type="ChEBI" id="CHEBI:597326"/>
    </ligand>
</feature>
<feature type="binding site" evidence="1">
    <location>
        <position position="177"/>
    </location>
    <ligand>
        <name>substrate</name>
    </ligand>
</feature>
<feature type="binding site" evidence="1">
    <location>
        <position position="208"/>
    </location>
    <ligand>
        <name>pyridoxal 5'-phosphate</name>
        <dbReference type="ChEBI" id="CHEBI:597326"/>
    </ligand>
</feature>
<feature type="binding site" evidence="1">
    <location>
        <begin position="236"/>
        <end position="238"/>
    </location>
    <ligand>
        <name>pyridoxal 5'-phosphate</name>
        <dbReference type="ChEBI" id="CHEBI:597326"/>
    </ligand>
</feature>
<feature type="binding site" evidence="1">
    <location>
        <position position="247"/>
    </location>
    <ligand>
        <name>pyridoxal 5'-phosphate</name>
        <dbReference type="ChEBI" id="CHEBI:597326"/>
    </ligand>
</feature>
<feature type="binding site" evidence="1">
    <location>
        <position position="366"/>
    </location>
    <ligand>
        <name>substrate</name>
    </ligand>
</feature>
<feature type="modified residue" description="N6-(pyridoxal phosphate)lysine" evidence="1">
    <location>
        <position position="239"/>
    </location>
</feature>
<accession>Q7NDX4</accession>
<sequence>MKTAARLDRIPPYLFAEIDRRRDEAVARGVDIINMGIGDPDKPTPPVVLEAMHAAIDDPSTHNYPPYKGTKAYREAAAAWFERRFGVGGFHPDTEVISSIGSKEAIHNTFLAFVDPGDYTLIPDPAYPVYRTSTIFAGGEFFAMPLLPENQLLPDLEAVPETVARKAKLLWLNYPNNPTGAVASLEFFEKVVHFAKKHDILVCHDNAYSEMAYDGYKPPSILQVPGARDVAIEFLSCSKAYNMTGWRVGFVIGNRTGIAGLGQVKTNIDSGVFKAIQQAAIAAFGLDDERLHALMAVYQNRRNIIVEGLRSLGWPLEAPKATLYVWAPIPKSFGSSVEFVGALLDKCGIIVPPGNGYGEHGEGFFRIALTVPDERMREAIGRMEAAGIRFEG</sequence>